<keyword id="KW-1185">Reference proteome</keyword>
<organismHost>
    <name type="scientific">Equus caballus</name>
    <name type="common">Horse</name>
    <dbReference type="NCBI Taxonomy" id="9796"/>
</organismHost>
<comment type="similarity">
    <text evidence="1">Belongs to the herpesviridae UL49 family.</text>
</comment>
<name>UL49_EHV2</name>
<sequence>MDPVRFPEIFHRLGGGGGGGGDLLGGGEADGLMRALCEGLRVGEEDCARFVLYGVAYWQGGRCPEWVAHITRCADLSCFATYLLTCHRSGGCEFTGGRVARDRLPSLRESVEVLQSLFLAFTLVIFKSMRVGVEAAGGAFRRMARDVHWNLLLTLGLDKAAPAFMAAAGLGEYSLPLVRCNNNMLNVLVGMKRKSRNHFQNDTPLSVPAPHLRLEPRCMFLREGRAEAPLSDHDLSFLKALRDGGRTVPCGNPFNAMVGALAFQSMAASRYVVLPNTTDIKSFTAHDLYSKIIGYNILCPFLSVPVHRGYRGGDGAGARLAVVCAECGYCLNLGKGKFSKVSFNPTHIFYCRDQKEKYLTTCASTGRIYCSFCGSCRIRTYPLKFTVGNRQYIRAVGASNCSIVVSDSATELDLVLPCLGDDCTQVLLRRVAVCDLFYLTELGPGLYCSRCLKPTS</sequence>
<reference key="1">
    <citation type="journal article" date="1995" name="J. Mol. Biol.">
        <title>The DNA sequence of equine herpesvirus 2.</title>
        <authorList>
            <person name="Telford E.A.R."/>
            <person name="Watson M.S."/>
            <person name="Aird H.C."/>
            <person name="Perry J."/>
            <person name="Davison A.J."/>
        </authorList>
    </citation>
    <scope>NUCLEOTIDE SEQUENCE [LARGE SCALE GENOMIC DNA]</scope>
</reference>
<feature type="chain" id="PRO_0000406016" description="Uncharacterized gene 66 protein">
    <location>
        <begin position="1"/>
        <end position="456"/>
    </location>
</feature>
<accession>Q66668</accession>
<proteinExistence type="inferred from homology"/>
<organism>
    <name type="scientific">Equine herpesvirus 2 (strain 86/87)</name>
    <name type="common">EHV-2</name>
    <dbReference type="NCBI Taxonomy" id="82831"/>
    <lineage>
        <taxon>Viruses</taxon>
        <taxon>Duplodnaviria</taxon>
        <taxon>Heunggongvirae</taxon>
        <taxon>Peploviricota</taxon>
        <taxon>Herviviricetes</taxon>
        <taxon>Herpesvirales</taxon>
        <taxon>Orthoherpesviridae</taxon>
        <taxon>Gammaherpesvirinae</taxon>
        <taxon>Percavirus</taxon>
        <taxon>Percavirus equidgamma2</taxon>
        <taxon>Equid gammaherpesvirus 2</taxon>
    </lineage>
</organism>
<protein>
    <recommendedName>
        <fullName>Uncharacterized gene 66 protein</fullName>
    </recommendedName>
</protein>
<dbReference type="EMBL" id="U20824">
    <property type="protein sequence ID" value="AAC13854.1"/>
    <property type="molecule type" value="Genomic_DNA"/>
</dbReference>
<dbReference type="PIR" id="S55661">
    <property type="entry name" value="S55661"/>
</dbReference>
<dbReference type="KEGG" id="vg:1461028"/>
<dbReference type="Proteomes" id="UP000007083">
    <property type="component" value="Segment"/>
</dbReference>
<dbReference type="GO" id="GO:0019033">
    <property type="term" value="C:viral tegument"/>
    <property type="evidence" value="ECO:0007669"/>
    <property type="project" value="InterPro"/>
</dbReference>
<dbReference type="GO" id="GO:0016032">
    <property type="term" value="P:viral process"/>
    <property type="evidence" value="ECO:0007669"/>
    <property type="project" value="InterPro"/>
</dbReference>
<dbReference type="InterPro" id="IPR004339">
    <property type="entry name" value="UL49"/>
</dbReference>
<dbReference type="Pfam" id="PF03117">
    <property type="entry name" value="Herpes_UL49_1"/>
    <property type="match status" value="1"/>
</dbReference>
<evidence type="ECO:0000305" key="1"/>
<gene>
    <name type="primary">66</name>
</gene>